<gene>
    <name evidence="1" type="primary">aroB</name>
    <name type="ordered locus">Rleg2_3595</name>
</gene>
<dbReference type="EC" id="4.2.3.4" evidence="1"/>
<dbReference type="EMBL" id="CP001191">
    <property type="protein sequence ID" value="ACI56862.1"/>
    <property type="molecule type" value="Genomic_DNA"/>
</dbReference>
<dbReference type="RefSeq" id="WP_012559144.1">
    <property type="nucleotide sequence ID" value="NC_011369.1"/>
</dbReference>
<dbReference type="SMR" id="B5ZSI4"/>
<dbReference type="STRING" id="395492.Rleg2_3595"/>
<dbReference type="KEGG" id="rlt:Rleg2_3595"/>
<dbReference type="eggNOG" id="COG0337">
    <property type="taxonomic scope" value="Bacteria"/>
</dbReference>
<dbReference type="HOGENOM" id="CLU_001201_0_2_5"/>
<dbReference type="UniPathway" id="UPA00053">
    <property type="reaction ID" value="UER00085"/>
</dbReference>
<dbReference type="Proteomes" id="UP000008330">
    <property type="component" value="Chromosome"/>
</dbReference>
<dbReference type="GO" id="GO:0005737">
    <property type="term" value="C:cytoplasm"/>
    <property type="evidence" value="ECO:0007669"/>
    <property type="project" value="UniProtKB-SubCell"/>
</dbReference>
<dbReference type="GO" id="GO:0003856">
    <property type="term" value="F:3-dehydroquinate synthase activity"/>
    <property type="evidence" value="ECO:0007669"/>
    <property type="project" value="UniProtKB-UniRule"/>
</dbReference>
<dbReference type="GO" id="GO:0046872">
    <property type="term" value="F:metal ion binding"/>
    <property type="evidence" value="ECO:0007669"/>
    <property type="project" value="UniProtKB-KW"/>
</dbReference>
<dbReference type="GO" id="GO:0000166">
    <property type="term" value="F:nucleotide binding"/>
    <property type="evidence" value="ECO:0007669"/>
    <property type="project" value="UniProtKB-KW"/>
</dbReference>
<dbReference type="GO" id="GO:0008652">
    <property type="term" value="P:amino acid biosynthetic process"/>
    <property type="evidence" value="ECO:0007669"/>
    <property type="project" value="UniProtKB-KW"/>
</dbReference>
<dbReference type="GO" id="GO:0009073">
    <property type="term" value="P:aromatic amino acid family biosynthetic process"/>
    <property type="evidence" value="ECO:0007669"/>
    <property type="project" value="UniProtKB-KW"/>
</dbReference>
<dbReference type="GO" id="GO:0009423">
    <property type="term" value="P:chorismate biosynthetic process"/>
    <property type="evidence" value="ECO:0007669"/>
    <property type="project" value="UniProtKB-UniRule"/>
</dbReference>
<dbReference type="CDD" id="cd08195">
    <property type="entry name" value="DHQS"/>
    <property type="match status" value="1"/>
</dbReference>
<dbReference type="FunFam" id="3.40.50.1970:FF:000001">
    <property type="entry name" value="3-dehydroquinate synthase"/>
    <property type="match status" value="1"/>
</dbReference>
<dbReference type="Gene3D" id="3.40.50.1970">
    <property type="match status" value="1"/>
</dbReference>
<dbReference type="Gene3D" id="1.20.1090.10">
    <property type="entry name" value="Dehydroquinate synthase-like - alpha domain"/>
    <property type="match status" value="1"/>
</dbReference>
<dbReference type="HAMAP" id="MF_00110">
    <property type="entry name" value="DHQ_synthase"/>
    <property type="match status" value="1"/>
</dbReference>
<dbReference type="InterPro" id="IPR050071">
    <property type="entry name" value="Dehydroquinate_synthase"/>
</dbReference>
<dbReference type="InterPro" id="IPR016037">
    <property type="entry name" value="DHQ_synth_AroB"/>
</dbReference>
<dbReference type="InterPro" id="IPR030963">
    <property type="entry name" value="DHQ_synth_fam"/>
</dbReference>
<dbReference type="InterPro" id="IPR030960">
    <property type="entry name" value="DHQS/DOIS_N"/>
</dbReference>
<dbReference type="InterPro" id="IPR056179">
    <property type="entry name" value="DHQS_C"/>
</dbReference>
<dbReference type="NCBIfam" id="TIGR01357">
    <property type="entry name" value="aroB"/>
    <property type="match status" value="1"/>
</dbReference>
<dbReference type="PANTHER" id="PTHR43622">
    <property type="entry name" value="3-DEHYDROQUINATE SYNTHASE"/>
    <property type="match status" value="1"/>
</dbReference>
<dbReference type="PANTHER" id="PTHR43622:SF7">
    <property type="entry name" value="3-DEHYDROQUINATE SYNTHASE, CHLOROPLASTIC"/>
    <property type="match status" value="1"/>
</dbReference>
<dbReference type="Pfam" id="PF01761">
    <property type="entry name" value="DHQ_synthase"/>
    <property type="match status" value="1"/>
</dbReference>
<dbReference type="Pfam" id="PF24621">
    <property type="entry name" value="DHQS_C"/>
    <property type="match status" value="1"/>
</dbReference>
<dbReference type="PIRSF" id="PIRSF001455">
    <property type="entry name" value="DHQ_synth"/>
    <property type="match status" value="1"/>
</dbReference>
<dbReference type="SUPFAM" id="SSF56796">
    <property type="entry name" value="Dehydroquinate synthase-like"/>
    <property type="match status" value="1"/>
</dbReference>
<reference key="1">
    <citation type="journal article" date="2010" name="Stand. Genomic Sci.">
        <title>Complete genome sequence of Rhizobium leguminosarum bv trifolii strain WSM2304, an effective microsymbiont of the South American clover Trifolium polymorphum.</title>
        <authorList>
            <person name="Reeve W."/>
            <person name="O'Hara G."/>
            <person name="Chain P."/>
            <person name="Ardley J."/>
            <person name="Brau L."/>
            <person name="Nandesena K."/>
            <person name="Tiwari R."/>
            <person name="Malfatti S."/>
            <person name="Kiss H."/>
            <person name="Lapidus A."/>
            <person name="Copeland A."/>
            <person name="Nolan M."/>
            <person name="Land M."/>
            <person name="Ivanova N."/>
            <person name="Mavromatis K."/>
            <person name="Markowitz V."/>
            <person name="Kyrpides N."/>
            <person name="Melino V."/>
            <person name="Denton M."/>
            <person name="Yates R."/>
            <person name="Howieson J."/>
        </authorList>
    </citation>
    <scope>NUCLEOTIDE SEQUENCE [LARGE SCALE GENOMIC DNA]</scope>
    <source>
        <strain>WSM2304</strain>
    </source>
</reference>
<comment type="function">
    <text evidence="1">Catalyzes the conversion of 3-deoxy-D-arabino-heptulosonate 7-phosphate (DAHP) to dehydroquinate (DHQ).</text>
</comment>
<comment type="catalytic activity">
    <reaction evidence="1">
        <text>7-phospho-2-dehydro-3-deoxy-D-arabino-heptonate = 3-dehydroquinate + phosphate</text>
        <dbReference type="Rhea" id="RHEA:21968"/>
        <dbReference type="ChEBI" id="CHEBI:32364"/>
        <dbReference type="ChEBI" id="CHEBI:43474"/>
        <dbReference type="ChEBI" id="CHEBI:58394"/>
        <dbReference type="EC" id="4.2.3.4"/>
    </reaction>
</comment>
<comment type="cofactor">
    <cofactor evidence="1">
        <name>Co(2+)</name>
        <dbReference type="ChEBI" id="CHEBI:48828"/>
    </cofactor>
    <cofactor evidence="1">
        <name>Zn(2+)</name>
        <dbReference type="ChEBI" id="CHEBI:29105"/>
    </cofactor>
    <text evidence="1">Binds 1 divalent metal cation per subunit. Can use either Co(2+) or Zn(2+).</text>
</comment>
<comment type="cofactor">
    <cofactor evidence="1">
        <name>NAD(+)</name>
        <dbReference type="ChEBI" id="CHEBI:57540"/>
    </cofactor>
</comment>
<comment type="pathway">
    <text evidence="1">Metabolic intermediate biosynthesis; chorismate biosynthesis; chorismate from D-erythrose 4-phosphate and phosphoenolpyruvate: step 2/7.</text>
</comment>
<comment type="subcellular location">
    <subcellularLocation>
        <location evidence="1">Cytoplasm</location>
    </subcellularLocation>
</comment>
<comment type="similarity">
    <text evidence="1">Belongs to the sugar phosphate cyclases superfamily. Dehydroquinate synthase family.</text>
</comment>
<name>AROB_RHILW</name>
<proteinExistence type="inferred from homology"/>
<evidence type="ECO:0000255" key="1">
    <source>
        <dbReference type="HAMAP-Rule" id="MF_00110"/>
    </source>
</evidence>
<feature type="chain" id="PRO_1000094584" description="3-dehydroquinate synthase">
    <location>
        <begin position="1"/>
        <end position="376"/>
    </location>
</feature>
<feature type="binding site" evidence="1">
    <location>
        <begin position="115"/>
        <end position="119"/>
    </location>
    <ligand>
        <name>NAD(+)</name>
        <dbReference type="ChEBI" id="CHEBI:57540"/>
    </ligand>
</feature>
<feature type="binding site" evidence="1">
    <location>
        <begin position="139"/>
        <end position="140"/>
    </location>
    <ligand>
        <name>NAD(+)</name>
        <dbReference type="ChEBI" id="CHEBI:57540"/>
    </ligand>
</feature>
<feature type="binding site" evidence="1">
    <location>
        <position position="152"/>
    </location>
    <ligand>
        <name>NAD(+)</name>
        <dbReference type="ChEBI" id="CHEBI:57540"/>
    </ligand>
</feature>
<feature type="binding site" evidence="1">
    <location>
        <position position="161"/>
    </location>
    <ligand>
        <name>NAD(+)</name>
        <dbReference type="ChEBI" id="CHEBI:57540"/>
    </ligand>
</feature>
<feature type="binding site" evidence="1">
    <location>
        <position position="194"/>
    </location>
    <ligand>
        <name>Zn(2+)</name>
        <dbReference type="ChEBI" id="CHEBI:29105"/>
    </ligand>
</feature>
<feature type="binding site" evidence="1">
    <location>
        <position position="256"/>
    </location>
    <ligand>
        <name>Zn(2+)</name>
        <dbReference type="ChEBI" id="CHEBI:29105"/>
    </ligand>
</feature>
<feature type="binding site" evidence="1">
    <location>
        <position position="275"/>
    </location>
    <ligand>
        <name>Zn(2+)</name>
        <dbReference type="ChEBI" id="CHEBI:29105"/>
    </ligand>
</feature>
<organism>
    <name type="scientific">Rhizobium leguminosarum bv. trifolii (strain WSM2304)</name>
    <dbReference type="NCBI Taxonomy" id="395492"/>
    <lineage>
        <taxon>Bacteria</taxon>
        <taxon>Pseudomonadati</taxon>
        <taxon>Pseudomonadota</taxon>
        <taxon>Alphaproteobacteria</taxon>
        <taxon>Hyphomicrobiales</taxon>
        <taxon>Rhizobiaceae</taxon>
        <taxon>Rhizobium/Agrobacterium group</taxon>
        <taxon>Rhizobium</taxon>
    </lineage>
</organism>
<sequence>MNAIPSASSVQTVHVPLGERAYDILIGPGLIARAGAEIASRLKGRKAAVVTDENVAPLYLQALVASLDEAGIASAAVVLPAGEKTKSFEHLMTACDKVLEARVERNDCVIALGGGVIGDLSGFAAGIVRRGVRFVQVPTSLLAQVDSSVGGKTGINSRHGKNLIGVFHQPDLVLADTDVLNTLSEREFRAGYAEVAKYGLIDKPDFFAWLEANWKAVFTGGAARIEAIAASCQAKADVVVADERENGPRALLNLGHTFGHALETATAYDSSRLVHGEGVSIGMVLAHEFSARMNLASPDDARRVERHLQEVGLPTRMSDIPGALPPAETLMDAIAQDKKVKSGKLTFILTRGIGQSFVADDVPASEVISFLREKHP</sequence>
<keyword id="KW-0028">Amino-acid biosynthesis</keyword>
<keyword id="KW-0057">Aromatic amino acid biosynthesis</keyword>
<keyword id="KW-0170">Cobalt</keyword>
<keyword id="KW-0963">Cytoplasm</keyword>
<keyword id="KW-0456">Lyase</keyword>
<keyword id="KW-0479">Metal-binding</keyword>
<keyword id="KW-0520">NAD</keyword>
<keyword id="KW-0547">Nucleotide-binding</keyword>
<keyword id="KW-1185">Reference proteome</keyword>
<keyword id="KW-0862">Zinc</keyword>
<protein>
    <recommendedName>
        <fullName evidence="1">3-dehydroquinate synthase</fullName>
        <shortName evidence="1">DHQS</shortName>
        <ecNumber evidence="1">4.2.3.4</ecNumber>
    </recommendedName>
</protein>
<accession>B5ZSI4</accession>